<protein>
    <recommendedName>
        <fullName evidence="1">ATP synthase subunit b 1</fullName>
    </recommendedName>
    <alternativeName>
        <fullName evidence="1">ATP synthase F(0) sector subunit b 1</fullName>
    </alternativeName>
    <alternativeName>
        <fullName evidence="1">ATPase subunit I 1</fullName>
    </alternativeName>
    <alternativeName>
        <fullName evidence="1">F-type ATPase subunit b 1</fullName>
        <shortName evidence="1">F-ATPase subunit b 1</shortName>
    </alternativeName>
</protein>
<feature type="chain" id="PRO_0000368361" description="ATP synthase subunit b 1">
    <location>
        <begin position="1"/>
        <end position="161"/>
    </location>
</feature>
<feature type="transmembrane region" description="Helical" evidence="1">
    <location>
        <begin position="6"/>
        <end position="26"/>
    </location>
</feature>
<keyword id="KW-0066">ATP synthesis</keyword>
<keyword id="KW-0997">Cell inner membrane</keyword>
<keyword id="KW-1003">Cell membrane</keyword>
<keyword id="KW-0138">CF(0)</keyword>
<keyword id="KW-0375">Hydrogen ion transport</keyword>
<keyword id="KW-0406">Ion transport</keyword>
<keyword id="KW-0472">Membrane</keyword>
<keyword id="KW-1185">Reference proteome</keyword>
<keyword id="KW-0812">Transmembrane</keyword>
<keyword id="KW-1133">Transmembrane helix</keyword>
<keyword id="KW-0813">Transport</keyword>
<proteinExistence type="inferred from homology"/>
<evidence type="ECO:0000255" key="1">
    <source>
        <dbReference type="HAMAP-Rule" id="MF_01398"/>
    </source>
</evidence>
<organism>
    <name type="scientific">Bradyrhizobium diazoefficiens (strain JCM 10833 / BCRC 13528 / IAM 13628 / NBRC 14792 / USDA 110)</name>
    <dbReference type="NCBI Taxonomy" id="224911"/>
    <lineage>
        <taxon>Bacteria</taxon>
        <taxon>Pseudomonadati</taxon>
        <taxon>Pseudomonadota</taxon>
        <taxon>Alphaproteobacteria</taxon>
        <taxon>Hyphomicrobiales</taxon>
        <taxon>Nitrobacteraceae</taxon>
        <taxon>Bradyrhizobium</taxon>
    </lineage>
</organism>
<name>ATPF1_BRADU</name>
<comment type="function">
    <text evidence="1">F(1)F(0) ATP synthase produces ATP from ADP in the presence of a proton or sodium gradient. F-type ATPases consist of two structural domains, F(1) containing the extramembraneous catalytic core and F(0) containing the membrane proton channel, linked together by a central stalk and a peripheral stalk. During catalysis, ATP synthesis in the catalytic domain of F(1) is coupled via a rotary mechanism of the central stalk subunits to proton translocation.</text>
</comment>
<comment type="function">
    <text evidence="1">Component of the F(0) channel, it forms part of the peripheral stalk, linking F(1) to F(0).</text>
</comment>
<comment type="subunit">
    <text evidence="1">F-type ATPases have 2 components, F(1) - the catalytic core - and F(0) - the membrane proton channel. F(1) has five subunits: alpha(3), beta(3), gamma(1), delta(1), epsilon(1). F(0) has three main subunits: a(1), b(2) and c(10-14). The alpha and beta chains form an alternating ring which encloses part of the gamma chain. F(1) is attached to F(0) by a central stalk formed by the gamma and epsilon chains, while a peripheral stalk is formed by the delta and b chains.</text>
</comment>
<comment type="subcellular location">
    <subcellularLocation>
        <location evidence="1">Cell inner membrane</location>
        <topology evidence="1">Single-pass membrane protein</topology>
    </subcellularLocation>
</comment>
<comment type="similarity">
    <text evidence="1">Belongs to the ATPase B chain family.</text>
</comment>
<gene>
    <name evidence="1" type="primary">atpF1</name>
    <name type="ordered locus">bll1185</name>
</gene>
<reference key="1">
    <citation type="journal article" date="2002" name="DNA Res.">
        <title>Complete genomic sequence of nitrogen-fixing symbiotic bacterium Bradyrhizobium japonicum USDA110.</title>
        <authorList>
            <person name="Kaneko T."/>
            <person name="Nakamura Y."/>
            <person name="Sato S."/>
            <person name="Minamisawa K."/>
            <person name="Uchiumi T."/>
            <person name="Sasamoto S."/>
            <person name="Watanabe A."/>
            <person name="Idesawa K."/>
            <person name="Iriguchi M."/>
            <person name="Kawashima K."/>
            <person name="Kohara M."/>
            <person name="Matsumoto M."/>
            <person name="Shimpo S."/>
            <person name="Tsuruoka H."/>
            <person name="Wada T."/>
            <person name="Yamada M."/>
            <person name="Tabata S."/>
        </authorList>
    </citation>
    <scope>NUCLEOTIDE SEQUENCE [LARGE SCALE GENOMIC DNA]</scope>
    <source>
        <strain>JCM 10833 / BCRC 13528 / IAM 13628 / NBRC 14792 / USDA 110</strain>
    </source>
</reference>
<sequence>MFFDPETWVAIAFVILMVVFGYLGVFKSAMTALDHRAARIKAELDDATRLKQEAAKVLADYKARSATAEREAADIIANAKVEAERIATEAKAKMEDFVARRTKTAESKIALAEAQAVADVRAAAAEAAVQAASTILSQSVKGQVADDLLAKSISEVRQKLN</sequence>
<dbReference type="EMBL" id="BA000040">
    <property type="protein sequence ID" value="BAC46450.1"/>
    <property type="molecule type" value="Genomic_DNA"/>
</dbReference>
<dbReference type="RefSeq" id="NP_767825.1">
    <property type="nucleotide sequence ID" value="NC_004463.1"/>
</dbReference>
<dbReference type="RefSeq" id="WP_011084004.1">
    <property type="nucleotide sequence ID" value="NC_004463.1"/>
</dbReference>
<dbReference type="SMR" id="Q89V71"/>
<dbReference type="STRING" id="224911.AAV28_02810"/>
<dbReference type="EnsemblBacteria" id="BAC46450">
    <property type="protein sequence ID" value="BAC46450"/>
    <property type="gene ID" value="BAC46450"/>
</dbReference>
<dbReference type="GeneID" id="46488460"/>
<dbReference type="KEGG" id="bja:bll1185"/>
<dbReference type="PATRIC" id="fig|224911.44.peg.588"/>
<dbReference type="eggNOG" id="COG0711">
    <property type="taxonomic scope" value="Bacteria"/>
</dbReference>
<dbReference type="HOGENOM" id="CLU_079215_6_1_5"/>
<dbReference type="InParanoid" id="Q89V71"/>
<dbReference type="OrthoDB" id="8479836at2"/>
<dbReference type="PhylomeDB" id="Q89V71"/>
<dbReference type="Proteomes" id="UP000002526">
    <property type="component" value="Chromosome"/>
</dbReference>
<dbReference type="GO" id="GO:0005886">
    <property type="term" value="C:plasma membrane"/>
    <property type="evidence" value="ECO:0007669"/>
    <property type="project" value="UniProtKB-SubCell"/>
</dbReference>
<dbReference type="GO" id="GO:0045259">
    <property type="term" value="C:proton-transporting ATP synthase complex"/>
    <property type="evidence" value="ECO:0007669"/>
    <property type="project" value="UniProtKB-KW"/>
</dbReference>
<dbReference type="GO" id="GO:0046933">
    <property type="term" value="F:proton-transporting ATP synthase activity, rotational mechanism"/>
    <property type="evidence" value="ECO:0007669"/>
    <property type="project" value="UniProtKB-UniRule"/>
</dbReference>
<dbReference type="CDD" id="cd06503">
    <property type="entry name" value="ATP-synt_Fo_b"/>
    <property type="match status" value="1"/>
</dbReference>
<dbReference type="HAMAP" id="MF_01398">
    <property type="entry name" value="ATP_synth_b_bprime"/>
    <property type="match status" value="1"/>
</dbReference>
<dbReference type="InterPro" id="IPR002146">
    <property type="entry name" value="ATP_synth_b/b'su_bac/chlpt"/>
</dbReference>
<dbReference type="InterPro" id="IPR050059">
    <property type="entry name" value="ATP_synthase_B_chain"/>
</dbReference>
<dbReference type="PANTHER" id="PTHR33445:SF1">
    <property type="entry name" value="ATP SYNTHASE SUBUNIT B"/>
    <property type="match status" value="1"/>
</dbReference>
<dbReference type="PANTHER" id="PTHR33445">
    <property type="entry name" value="ATP SYNTHASE SUBUNIT B', CHLOROPLASTIC"/>
    <property type="match status" value="1"/>
</dbReference>
<dbReference type="Pfam" id="PF00430">
    <property type="entry name" value="ATP-synt_B"/>
    <property type="match status" value="1"/>
</dbReference>
<accession>Q89V71</accession>